<reference key="1">
    <citation type="journal article" date="2006" name="Nature">
        <title>DNA sequence of human chromosome 17 and analysis of rearrangement in the human lineage.</title>
        <authorList>
            <person name="Zody M.C."/>
            <person name="Garber M."/>
            <person name="Adams D.J."/>
            <person name="Sharpe T."/>
            <person name="Harrow J."/>
            <person name="Lupski J.R."/>
            <person name="Nicholson C."/>
            <person name="Searle S.M."/>
            <person name="Wilming L."/>
            <person name="Young S.K."/>
            <person name="Abouelleil A."/>
            <person name="Allen N.R."/>
            <person name="Bi W."/>
            <person name="Bloom T."/>
            <person name="Borowsky M.L."/>
            <person name="Bugalter B.E."/>
            <person name="Butler J."/>
            <person name="Chang J.L."/>
            <person name="Chen C.-K."/>
            <person name="Cook A."/>
            <person name="Corum B."/>
            <person name="Cuomo C.A."/>
            <person name="de Jong P.J."/>
            <person name="DeCaprio D."/>
            <person name="Dewar K."/>
            <person name="FitzGerald M."/>
            <person name="Gilbert J."/>
            <person name="Gibson R."/>
            <person name="Gnerre S."/>
            <person name="Goldstein S."/>
            <person name="Grafham D.V."/>
            <person name="Grocock R."/>
            <person name="Hafez N."/>
            <person name="Hagopian D.S."/>
            <person name="Hart E."/>
            <person name="Norman C.H."/>
            <person name="Humphray S."/>
            <person name="Jaffe D.B."/>
            <person name="Jones M."/>
            <person name="Kamal M."/>
            <person name="Khodiyar V.K."/>
            <person name="LaButti K."/>
            <person name="Laird G."/>
            <person name="Lehoczky J."/>
            <person name="Liu X."/>
            <person name="Lokyitsang T."/>
            <person name="Loveland J."/>
            <person name="Lui A."/>
            <person name="Macdonald P."/>
            <person name="Major J.E."/>
            <person name="Matthews L."/>
            <person name="Mauceli E."/>
            <person name="McCarroll S.A."/>
            <person name="Mihalev A.H."/>
            <person name="Mudge J."/>
            <person name="Nguyen C."/>
            <person name="Nicol R."/>
            <person name="O'Leary S.B."/>
            <person name="Osoegawa K."/>
            <person name="Schwartz D.C."/>
            <person name="Shaw-Smith C."/>
            <person name="Stankiewicz P."/>
            <person name="Steward C."/>
            <person name="Swarbreck D."/>
            <person name="Venkataraman V."/>
            <person name="Whittaker C.A."/>
            <person name="Yang X."/>
            <person name="Zimmer A.R."/>
            <person name="Bradley A."/>
            <person name="Hubbard T."/>
            <person name="Birren B.W."/>
            <person name="Rogers J."/>
            <person name="Lander E.S."/>
            <person name="Nusbaum C."/>
        </authorList>
    </citation>
    <scope>NUCLEOTIDE SEQUENCE [LARGE SCALE GENOMIC DNA]</scope>
</reference>
<feature type="chain" id="PRO_0000443079" description="Parvalbumin-like EF-hand-containing protein">
    <location>
        <begin position="1"/>
        <end position="134"/>
    </location>
</feature>
<feature type="domain" description="EF-hand 1" evidence="2">
    <location>
        <begin position="55"/>
        <end position="90"/>
    </location>
</feature>
<feature type="domain" description="EF-hand 2" evidence="2">
    <location>
        <begin position="96"/>
        <end position="131"/>
    </location>
</feature>
<feature type="binding site" evidence="1 2">
    <location>
        <position position="68"/>
    </location>
    <ligand>
        <name>Ca(2+)</name>
        <dbReference type="ChEBI" id="CHEBI:29108"/>
        <label>1</label>
    </ligand>
</feature>
<feature type="binding site" evidence="1 2">
    <location>
        <position position="70"/>
    </location>
    <ligand>
        <name>Ca(2+)</name>
        <dbReference type="ChEBI" id="CHEBI:29108"/>
        <label>1</label>
    </ligand>
</feature>
<feature type="binding site" evidence="1 2">
    <location>
        <position position="72"/>
    </location>
    <ligand>
        <name>Ca(2+)</name>
        <dbReference type="ChEBI" id="CHEBI:29108"/>
        <label>1</label>
    </ligand>
</feature>
<feature type="binding site" evidence="1">
    <location>
        <position position="74"/>
    </location>
    <ligand>
        <name>Ca(2+)</name>
        <dbReference type="ChEBI" id="CHEBI:29108"/>
        <label>1</label>
    </ligand>
</feature>
<feature type="binding site" evidence="1">
    <location>
        <position position="76"/>
    </location>
    <ligand>
        <name>Ca(2+)</name>
        <dbReference type="ChEBI" id="CHEBI:29108"/>
        <label>1</label>
    </ligand>
</feature>
<feature type="binding site" evidence="1 2">
    <location>
        <position position="79"/>
    </location>
    <ligand>
        <name>Ca(2+)</name>
        <dbReference type="ChEBI" id="CHEBI:29108"/>
        <label>1</label>
    </ligand>
</feature>
<feature type="binding site" evidence="1">
    <location>
        <position position="109"/>
    </location>
    <ligand>
        <name>Ca(2+)</name>
        <dbReference type="ChEBI" id="CHEBI:29108"/>
        <label>2</label>
    </ligand>
</feature>
<feature type="binding site" evidence="1">
    <location>
        <position position="113"/>
    </location>
    <ligand>
        <name>Ca(2+)</name>
        <dbReference type="ChEBI" id="CHEBI:29108"/>
        <label>2</label>
    </ligand>
</feature>
<feature type="binding site" evidence="1">
    <location>
        <position position="120"/>
    </location>
    <ligand>
        <name>Ca(2+)</name>
        <dbReference type="ChEBI" id="CHEBI:29108"/>
        <label>2</label>
    </ligand>
</feature>
<keyword id="KW-0106">Calcium</keyword>
<keyword id="KW-0479">Metal-binding</keyword>
<keyword id="KW-1185">Reference proteome</keyword>
<keyword id="KW-0677">Repeat</keyword>
<gene>
    <name evidence="4" type="primary">PVALEF</name>
</gene>
<organism>
    <name type="scientific">Homo sapiens</name>
    <name type="common">Human</name>
    <dbReference type="NCBI Taxonomy" id="9606"/>
    <lineage>
        <taxon>Eukaryota</taxon>
        <taxon>Metazoa</taxon>
        <taxon>Chordata</taxon>
        <taxon>Craniata</taxon>
        <taxon>Vertebrata</taxon>
        <taxon>Euteleostomi</taxon>
        <taxon>Mammalia</taxon>
        <taxon>Eutheria</taxon>
        <taxon>Euarchontoglires</taxon>
        <taxon>Primates</taxon>
        <taxon>Haplorrhini</taxon>
        <taxon>Catarrhini</taxon>
        <taxon>Hominidae</taxon>
        <taxon>Homo</taxon>
    </lineage>
</organism>
<dbReference type="EMBL" id="AC027601">
    <property type="status" value="NOT_ANNOTATED_CDS"/>
    <property type="molecule type" value="Genomic_DNA"/>
</dbReference>
<dbReference type="EMBL" id="AC115099">
    <property type="status" value="NOT_ANNOTATED_CDS"/>
    <property type="molecule type" value="Genomic_DNA"/>
</dbReference>
<dbReference type="CCDS" id="CCDS86647.1"/>
<dbReference type="RefSeq" id="NP_001341568.1">
    <property type="nucleotide sequence ID" value="NM_001354639.2"/>
</dbReference>
<dbReference type="SMR" id="A0A1B0GWK0"/>
<dbReference type="STRING" id="9606.ENSP00000490956"/>
<dbReference type="GlyGen" id="A0A1B0GWK0">
    <property type="glycosylation" value="1 site"/>
</dbReference>
<dbReference type="BioMuta" id="PVALEF"/>
<dbReference type="Ensembl" id="ENST00000637878.2">
    <property type="protein sequence ID" value="ENSP00000490956.1"/>
    <property type="gene ID" value="ENSG00000225180.8"/>
</dbReference>
<dbReference type="GeneID" id="388428"/>
<dbReference type="MANE-Select" id="ENST00000637878.2">
    <property type="protein sequence ID" value="ENSP00000490956.1"/>
    <property type="RefSeq nucleotide sequence ID" value="NM_001354639.2"/>
    <property type="RefSeq protein sequence ID" value="NP_001341568.1"/>
</dbReference>
<dbReference type="AGR" id="HGNC:40053"/>
<dbReference type="GeneCards" id="PVALEF"/>
<dbReference type="HGNC" id="HGNC:40053">
    <property type="gene designation" value="PVALEF"/>
</dbReference>
<dbReference type="HPA" id="ENSG00000225180">
    <property type="expression patterns" value="Not detected"/>
</dbReference>
<dbReference type="neXtProt" id="NX_A0A1B0GWK0"/>
<dbReference type="VEuPathDB" id="HostDB:ENSG00000225180"/>
<dbReference type="GeneTree" id="ENSGT00930000151136"/>
<dbReference type="InParanoid" id="A0A1B0GWK0"/>
<dbReference type="OMA" id="CQVKKMA"/>
<dbReference type="OrthoDB" id="26525at2759"/>
<dbReference type="PAN-GO" id="A0A1B0GWK0">
    <property type="GO annotations" value="6 GO annotations based on evolutionary models"/>
</dbReference>
<dbReference type="SignaLink" id="A0A1B0GWK0"/>
<dbReference type="Pharos" id="A0A1B0GWK0">
    <property type="development level" value="Tdark"/>
</dbReference>
<dbReference type="PRO" id="PR:A0A1B0GWK0"/>
<dbReference type="Proteomes" id="UP000005640">
    <property type="component" value="Chromosome 17"/>
</dbReference>
<dbReference type="RNAct" id="A0A1B0GWK0">
    <property type="molecule type" value="protein"/>
</dbReference>
<dbReference type="Bgee" id="ENSG00000225180">
    <property type="expression patterns" value="Expressed in cerebellar hemisphere and 19 other cell types or tissues"/>
</dbReference>
<dbReference type="GO" id="GO:0005861">
    <property type="term" value="C:troponin complex"/>
    <property type="evidence" value="ECO:0000318"/>
    <property type="project" value="GO_Central"/>
</dbReference>
<dbReference type="GO" id="GO:0005509">
    <property type="term" value="F:calcium ion binding"/>
    <property type="evidence" value="ECO:0007669"/>
    <property type="project" value="InterPro"/>
</dbReference>
<dbReference type="GO" id="GO:0003009">
    <property type="term" value="P:skeletal muscle contraction"/>
    <property type="evidence" value="ECO:0000318"/>
    <property type="project" value="GO_Central"/>
</dbReference>
<dbReference type="FunFam" id="1.10.238.10:FF:000629">
    <property type="entry name" value="Parvalbumin beta 2"/>
    <property type="match status" value="1"/>
</dbReference>
<dbReference type="Gene3D" id="1.10.238.10">
    <property type="entry name" value="EF-hand"/>
    <property type="match status" value="1"/>
</dbReference>
<dbReference type="InterPro" id="IPR011992">
    <property type="entry name" value="EF-hand-dom_pair"/>
</dbReference>
<dbReference type="InterPro" id="IPR018247">
    <property type="entry name" value="EF_Hand_1_Ca_BS"/>
</dbReference>
<dbReference type="InterPro" id="IPR002048">
    <property type="entry name" value="EF_hand_dom"/>
</dbReference>
<dbReference type="InterPro" id="IPR008080">
    <property type="entry name" value="Parvalbumin"/>
</dbReference>
<dbReference type="PANTHER" id="PTHR11653">
    <property type="entry name" value="PARVALBUMIN ALPHA"/>
    <property type="match status" value="1"/>
</dbReference>
<dbReference type="PANTHER" id="PTHR11653:SF2">
    <property type="entry name" value="PARVALBUMIN ALPHA"/>
    <property type="match status" value="1"/>
</dbReference>
<dbReference type="Pfam" id="PF13499">
    <property type="entry name" value="EF-hand_7"/>
    <property type="match status" value="1"/>
</dbReference>
<dbReference type="PRINTS" id="PR01697">
    <property type="entry name" value="PARVALBUMIN"/>
</dbReference>
<dbReference type="SMART" id="SM00054">
    <property type="entry name" value="EFh"/>
    <property type="match status" value="2"/>
</dbReference>
<dbReference type="SUPFAM" id="SSF47473">
    <property type="entry name" value="EF-hand"/>
    <property type="match status" value="1"/>
</dbReference>
<dbReference type="PROSITE" id="PS00018">
    <property type="entry name" value="EF_HAND_1"/>
    <property type="match status" value="1"/>
</dbReference>
<dbReference type="PROSITE" id="PS50222">
    <property type="entry name" value="EF_HAND_2"/>
    <property type="match status" value="2"/>
</dbReference>
<name>PVLEF_HUMAN</name>
<sequence>MEEDFSSQMKKMALAMGTSLSDKDIELLPTDMRHHGSFNYLKFFKHIRKLHASGQLDDAIHTAFQSLDKDKSGFIEWNEIKYILSIIPSSGPTTPLTDEEAEAMIQAADTHGDGRINYEEFSELIKKEKIPKKK</sequence>
<evidence type="ECO:0000250" key="1">
    <source>
        <dbReference type="UniProtKB" id="P02621"/>
    </source>
</evidence>
<evidence type="ECO:0000255" key="2">
    <source>
        <dbReference type="PROSITE-ProRule" id="PRU00448"/>
    </source>
</evidence>
<evidence type="ECO:0000305" key="3"/>
<evidence type="ECO:0000312" key="4">
    <source>
        <dbReference type="HGNC" id="HGNC:40053"/>
    </source>
</evidence>
<proteinExistence type="inferred from homology"/>
<comment type="similarity">
    <text evidence="3">Belongs to the parvalbumin family.</text>
</comment>
<protein>
    <recommendedName>
        <fullName evidence="3">Parvalbumin-like EF-hand-containing protein</fullName>
    </recommendedName>
</protein>
<accession>A0A1B0GWK0</accession>